<protein>
    <recommendedName>
        <fullName evidence="1">HTH-type transcriptional regulator RamB</fullName>
    </recommendedName>
</protein>
<organism>
    <name type="scientific">Mycobacterium tuberculosis (strain CDC 1551 / Oshkosh)</name>
    <dbReference type="NCBI Taxonomy" id="83331"/>
    <lineage>
        <taxon>Bacteria</taxon>
        <taxon>Bacillati</taxon>
        <taxon>Actinomycetota</taxon>
        <taxon>Actinomycetes</taxon>
        <taxon>Mycobacteriales</taxon>
        <taxon>Mycobacteriaceae</taxon>
        <taxon>Mycobacterium</taxon>
        <taxon>Mycobacterium tuberculosis complex</taxon>
    </lineage>
</organism>
<proteinExistence type="inferred from homology"/>
<keyword id="KW-0238">DNA-binding</keyword>
<keyword id="KW-0443">Lipid metabolism</keyword>
<keyword id="KW-1185">Reference proteome</keyword>
<keyword id="KW-0678">Repressor</keyword>
<keyword id="KW-0753">Steroid metabolism</keyword>
<keyword id="KW-1207">Sterol metabolism</keyword>
<keyword id="KW-0804">Transcription</keyword>
<keyword id="KW-0805">Transcription regulation</keyword>
<evidence type="ECO:0000250" key="1">
    <source>
        <dbReference type="UniProtKB" id="P9WMI1"/>
    </source>
</evidence>
<evidence type="ECO:0000255" key="2">
    <source>
        <dbReference type="PROSITE-ProRule" id="PRU00257"/>
    </source>
</evidence>
<evidence type="ECO:0000305" key="3"/>
<reference key="1">
    <citation type="journal article" date="2002" name="J. Bacteriol.">
        <title>Whole-genome comparison of Mycobacterium tuberculosis clinical and laboratory strains.</title>
        <authorList>
            <person name="Fleischmann R.D."/>
            <person name="Alland D."/>
            <person name="Eisen J.A."/>
            <person name="Carpenter L."/>
            <person name="White O."/>
            <person name="Peterson J.D."/>
            <person name="DeBoy R.T."/>
            <person name="Dodson R.J."/>
            <person name="Gwinn M.L."/>
            <person name="Haft D.H."/>
            <person name="Hickey E.K."/>
            <person name="Kolonay J.F."/>
            <person name="Nelson W.C."/>
            <person name="Umayam L.A."/>
            <person name="Ermolaeva M.D."/>
            <person name="Salzberg S.L."/>
            <person name="Delcher A."/>
            <person name="Utterback T.R."/>
            <person name="Weidman J.F."/>
            <person name="Khouri H.M."/>
            <person name="Gill J."/>
            <person name="Mikula A."/>
            <person name="Bishai W."/>
            <person name="Jacobs W.R. Jr."/>
            <person name="Venter J.C."/>
            <person name="Fraser C.M."/>
        </authorList>
    </citation>
    <scope>NUCLEOTIDE SEQUENCE [LARGE SCALE GENOMIC DNA]</scope>
    <source>
        <strain>CDC 1551 / Oshkosh</strain>
    </source>
</reference>
<sequence length="474" mass="53072">MSKTYVGSRVRQLRNERGFSQAALAQMLEISPSYLNQIEHDVRPLTVAVLLRITEVFGVDATFFASQDDTRLVAELREVTLDRDLDIAIDPHEVAEMVSAHPGLACAVVNLHRRYRITTAQLAAATEERFSDGSGRGSITMPHEEVRDYFYQRQNYLHALDTAAEDLTAQMRMHHGDLARELTRRLTEVHGVRINKRIDLGDTVLHRYDPATNTLEISSHLSPGQQVFKMAAELAYLEFGDLIDAMVTDGKFTSAESRTLARLGLANYFAAATVLPYRQFHDVAENFRYDVERLSAFYSVSYETIAHRLSTLQRPSMRGVPFTFVRVDRAGNMSKRQSATGFHFSSSGGTCPLWNVYETFANPGKILVQIAQMPDGRNYLWVARTVELRAARYGQPGKTFAIGLGCELRHAHRLVYSEGLDLSGDPNTAATPIGAGCRVCERDNCPQRAFPALGRALDLDEHRSTVSPYLVKQL</sequence>
<name>RAMB_MYCTO</name>
<accession>P9WMI0</accession>
<accession>L0T6J8</accession>
<accession>O53750</accession>
<accession>Q7D9R8</accession>
<comment type="function">
    <text evidence="1">Involved in the control of the glyoxylate cycle. RamB negatively controls the expression of icl expression during growth on acetate as the sole carbon source.</text>
</comment>
<comment type="induction">
    <text evidence="1">RamB represses its own expression (independently of the available carbon source) and is negatively regulated by PrpR.</text>
</comment>
<comment type="similarity">
    <text evidence="3">Belongs to the short-chain fatty acyl-CoA assimilation regulator (ScfR) family.</text>
</comment>
<dbReference type="EMBL" id="AE000516">
    <property type="protein sequence ID" value="AAK44705.1"/>
    <property type="molecule type" value="Genomic_DNA"/>
</dbReference>
<dbReference type="PIR" id="E70828">
    <property type="entry name" value="E70828"/>
</dbReference>
<dbReference type="RefSeq" id="WP_003898467.1">
    <property type="nucleotide sequence ID" value="NZ_KK341227.1"/>
</dbReference>
<dbReference type="SMR" id="P9WMI0"/>
<dbReference type="KEGG" id="mtc:MT0481"/>
<dbReference type="PATRIC" id="fig|83331.31.peg.511"/>
<dbReference type="HOGENOM" id="CLU_046383_0_0_11"/>
<dbReference type="Proteomes" id="UP000001020">
    <property type="component" value="Chromosome"/>
</dbReference>
<dbReference type="GO" id="GO:0005829">
    <property type="term" value="C:cytosol"/>
    <property type="evidence" value="ECO:0007669"/>
    <property type="project" value="TreeGrafter"/>
</dbReference>
<dbReference type="GO" id="GO:0003677">
    <property type="term" value="F:DNA binding"/>
    <property type="evidence" value="ECO:0000250"/>
    <property type="project" value="UniProtKB"/>
</dbReference>
<dbReference type="GO" id="GO:0003700">
    <property type="term" value="F:DNA-binding transcription factor activity"/>
    <property type="evidence" value="ECO:0007669"/>
    <property type="project" value="TreeGrafter"/>
</dbReference>
<dbReference type="GO" id="GO:0006355">
    <property type="term" value="P:regulation of DNA-templated transcription"/>
    <property type="evidence" value="ECO:0000250"/>
    <property type="project" value="UniProtKB"/>
</dbReference>
<dbReference type="GO" id="GO:0008202">
    <property type="term" value="P:steroid metabolic process"/>
    <property type="evidence" value="ECO:0007669"/>
    <property type="project" value="UniProtKB-KW"/>
</dbReference>
<dbReference type="CDD" id="cd00093">
    <property type="entry name" value="HTH_XRE"/>
    <property type="match status" value="1"/>
</dbReference>
<dbReference type="FunFam" id="1.10.260.40:FF:000025">
    <property type="entry name" value="Cro/Cl family transcriptional regulator"/>
    <property type="match status" value="1"/>
</dbReference>
<dbReference type="Gene3D" id="1.10.260.40">
    <property type="entry name" value="lambda repressor-like DNA-binding domains"/>
    <property type="match status" value="1"/>
</dbReference>
<dbReference type="InterPro" id="IPR050807">
    <property type="entry name" value="Bact_TransReg_Diox"/>
</dbReference>
<dbReference type="InterPro" id="IPR001387">
    <property type="entry name" value="Cro/C1-type_HTH"/>
</dbReference>
<dbReference type="InterPro" id="IPR026281">
    <property type="entry name" value="HTH_RamB"/>
</dbReference>
<dbReference type="InterPro" id="IPR010359">
    <property type="entry name" value="IrrE_HExxH"/>
</dbReference>
<dbReference type="InterPro" id="IPR010982">
    <property type="entry name" value="Lambda_DNA-bd_dom_sf"/>
</dbReference>
<dbReference type="InterPro" id="IPR018653">
    <property type="entry name" value="ScfR_C"/>
</dbReference>
<dbReference type="NCBIfam" id="NF038139">
    <property type="entry name" value="Reg_Aceta_RamB"/>
    <property type="match status" value="1"/>
</dbReference>
<dbReference type="PANTHER" id="PTHR46797">
    <property type="entry name" value="HTH-TYPE TRANSCRIPTIONAL REGULATOR"/>
    <property type="match status" value="1"/>
</dbReference>
<dbReference type="PANTHER" id="PTHR46797:SF23">
    <property type="entry name" value="HTH-TYPE TRANSCRIPTIONAL REGULATOR SUTR"/>
    <property type="match status" value="1"/>
</dbReference>
<dbReference type="Pfam" id="PF01381">
    <property type="entry name" value="HTH_3"/>
    <property type="match status" value="1"/>
</dbReference>
<dbReference type="Pfam" id="PF06114">
    <property type="entry name" value="Peptidase_M78"/>
    <property type="match status" value="1"/>
</dbReference>
<dbReference type="Pfam" id="PF09856">
    <property type="entry name" value="ScfRs"/>
    <property type="match status" value="1"/>
</dbReference>
<dbReference type="PIRSF" id="PIRSF019251">
    <property type="entry name" value="Rv0465c"/>
    <property type="match status" value="1"/>
</dbReference>
<dbReference type="SMART" id="SM00530">
    <property type="entry name" value="HTH_XRE"/>
    <property type="match status" value="1"/>
</dbReference>
<dbReference type="SUPFAM" id="SSF47413">
    <property type="entry name" value="lambda repressor-like DNA-binding domains"/>
    <property type="match status" value="1"/>
</dbReference>
<dbReference type="PROSITE" id="PS50943">
    <property type="entry name" value="HTH_CROC1"/>
    <property type="match status" value="1"/>
</dbReference>
<gene>
    <name evidence="1" type="primary">ramB</name>
    <name type="ordered locus">MT0481</name>
</gene>
<feature type="chain" id="PRO_0000427300" description="HTH-type transcriptional regulator RamB">
    <location>
        <begin position="1"/>
        <end position="474"/>
    </location>
</feature>
<feature type="domain" description="HTH cro/C1-type" evidence="2">
    <location>
        <begin position="10"/>
        <end position="64"/>
    </location>
</feature>
<feature type="DNA-binding region" description="H-T-H motif" evidence="2">
    <location>
        <begin position="21"/>
        <end position="40"/>
    </location>
</feature>